<protein>
    <recommendedName>
        <fullName>Transposon Tn2501 resolvase</fullName>
    </recommendedName>
</protein>
<accession>P05823</accession>
<organism>
    <name type="scientific">Escherichia coli</name>
    <dbReference type="NCBI Taxonomy" id="562"/>
    <lineage>
        <taxon>Bacteria</taxon>
        <taxon>Pseudomonadati</taxon>
        <taxon>Pseudomonadota</taxon>
        <taxon>Gammaproteobacteria</taxon>
        <taxon>Enterobacterales</taxon>
        <taxon>Enterobacteriaceae</taxon>
        <taxon>Escherichia</taxon>
    </lineage>
</organism>
<gene>
    <name type="primary">tnpR</name>
</gene>
<comment type="function">
    <text>Resolvase catalyzes the resolution (a site-specific recombination) of the cointegrated replicon to yield the final transposition products.</text>
</comment>
<comment type="miscellaneous">
    <text>Tn2501 is a cryptic class II transposon found as part of the lactose transposon Tn951.</text>
</comment>
<comment type="similarity">
    <text evidence="3">Belongs to the site-specific recombinase resolvase family.</text>
</comment>
<reference key="1">
    <citation type="journal article" date="1987" name="J. Bacteriol.">
        <title>Tn2501, a component of the lactose transposon Tn951, is an example of a new category of class II transposable elements.</title>
        <authorList>
            <person name="Michiels T."/>
            <person name="Cornelis G."/>
            <person name="Ellis K."/>
            <person name="Grinsted J."/>
        </authorList>
    </citation>
    <scope>NUCLEOTIDE SEQUENCE [GENOMIC DNA]</scope>
</reference>
<proteinExistence type="inferred from homology"/>
<name>TNR0_ECOLX</name>
<feature type="chain" id="PRO_0000196377" description="Transposon Tn2501 resolvase">
    <location>
        <begin position="1"/>
        <end position="194"/>
    </location>
</feature>
<feature type="domain" description="Resolvase/invertase-type recombinase catalytic" evidence="2">
    <location>
        <begin position="3"/>
        <end position="143"/>
    </location>
</feature>
<feature type="DNA-binding region" description="H-T-H motif" evidence="1">
    <location>
        <begin position="170"/>
        <end position="189"/>
    </location>
</feature>
<feature type="active site" description="O-(5'-phospho-DNA)-serine intermediate" evidence="2">
    <location>
        <position position="11"/>
    </location>
</feature>
<dbReference type="EMBL" id="M15197">
    <property type="protein sequence ID" value="AAA27426.1"/>
    <property type="molecule type" value="Genomic_DNA"/>
</dbReference>
<dbReference type="PIR" id="B27758">
    <property type="entry name" value="RPECR5"/>
</dbReference>
<dbReference type="SMR" id="P05823"/>
<dbReference type="STRING" id="585034.ECIAI1_1564"/>
<dbReference type="GO" id="GO:0003677">
    <property type="term" value="F:DNA binding"/>
    <property type="evidence" value="ECO:0007669"/>
    <property type="project" value="UniProtKB-KW"/>
</dbReference>
<dbReference type="GO" id="GO:0000150">
    <property type="term" value="F:DNA strand exchange activity"/>
    <property type="evidence" value="ECO:0007669"/>
    <property type="project" value="InterPro"/>
</dbReference>
<dbReference type="GO" id="GO:0015074">
    <property type="term" value="P:DNA integration"/>
    <property type="evidence" value="ECO:0007669"/>
    <property type="project" value="UniProtKB-KW"/>
</dbReference>
<dbReference type="CDD" id="cd00569">
    <property type="entry name" value="HTH_Hin_like"/>
    <property type="match status" value="1"/>
</dbReference>
<dbReference type="CDD" id="cd03768">
    <property type="entry name" value="SR_ResInv"/>
    <property type="match status" value="1"/>
</dbReference>
<dbReference type="Gene3D" id="1.10.10.60">
    <property type="entry name" value="Homeodomain-like"/>
    <property type="match status" value="1"/>
</dbReference>
<dbReference type="Gene3D" id="3.40.50.1390">
    <property type="entry name" value="Resolvase, N-terminal catalytic domain"/>
    <property type="match status" value="1"/>
</dbReference>
<dbReference type="InterPro" id="IPR009057">
    <property type="entry name" value="Homeodomain-like_sf"/>
</dbReference>
<dbReference type="InterPro" id="IPR006118">
    <property type="entry name" value="Recombinase_CS"/>
</dbReference>
<dbReference type="InterPro" id="IPR006119">
    <property type="entry name" value="Resolv_N"/>
</dbReference>
<dbReference type="InterPro" id="IPR036162">
    <property type="entry name" value="Resolvase-like_N_sf"/>
</dbReference>
<dbReference type="InterPro" id="IPR006120">
    <property type="entry name" value="Resolvase_HTH_dom"/>
</dbReference>
<dbReference type="InterPro" id="IPR050639">
    <property type="entry name" value="SSR_resolvase"/>
</dbReference>
<dbReference type="PANTHER" id="PTHR30461">
    <property type="entry name" value="DNA-INVERTASE FROM LAMBDOID PROPHAGE"/>
    <property type="match status" value="1"/>
</dbReference>
<dbReference type="PANTHER" id="PTHR30461:SF2">
    <property type="entry name" value="SERINE RECOMBINASE PINE-RELATED"/>
    <property type="match status" value="1"/>
</dbReference>
<dbReference type="Pfam" id="PF02796">
    <property type="entry name" value="HTH_7"/>
    <property type="match status" value="1"/>
</dbReference>
<dbReference type="Pfam" id="PF00239">
    <property type="entry name" value="Resolvase"/>
    <property type="match status" value="1"/>
</dbReference>
<dbReference type="SMART" id="SM00857">
    <property type="entry name" value="Resolvase"/>
    <property type="match status" value="1"/>
</dbReference>
<dbReference type="SUPFAM" id="SSF46689">
    <property type="entry name" value="Homeodomain-like"/>
    <property type="match status" value="1"/>
</dbReference>
<dbReference type="SUPFAM" id="SSF53041">
    <property type="entry name" value="Resolvase-like"/>
    <property type="match status" value="1"/>
</dbReference>
<dbReference type="PROSITE" id="PS00397">
    <property type="entry name" value="RECOMBINASES_1"/>
    <property type="match status" value="1"/>
</dbReference>
<dbReference type="PROSITE" id="PS00398">
    <property type="entry name" value="RECOMBINASES_2"/>
    <property type="match status" value="1"/>
</dbReference>
<dbReference type="PROSITE" id="PS51736">
    <property type="entry name" value="RECOMBINASES_3"/>
    <property type="match status" value="1"/>
</dbReference>
<sequence length="194" mass="21421">MSRVFAYCRVSTLEQTTENQRREIEAAGFAIRPQRLIEEHISGSVAASERPGFIRLLDRMENGDVLIVTKLDRLGRNAMDIRKTVEQLASSDIRVHCLALGGVDLTSAAGRMTMQVISAVAEFERDLLLERTHSGIARAKATGKRFGRPSALNEEQQLTVIARINAGISISAIAREFNTTRQTILRVKAGQQSS</sequence>
<evidence type="ECO:0000255" key="1"/>
<evidence type="ECO:0000255" key="2">
    <source>
        <dbReference type="PROSITE-ProRule" id="PRU01072"/>
    </source>
</evidence>
<evidence type="ECO:0000305" key="3"/>
<keyword id="KW-0229">DNA integration</keyword>
<keyword id="KW-0233">DNA recombination</keyword>
<keyword id="KW-0238">DNA-binding</keyword>
<keyword id="KW-0814">Transposable element</keyword>